<proteinExistence type="inferred from homology"/>
<reference key="1">
    <citation type="journal article" date="2009" name="PLoS Genet.">
        <title>Organised genome dynamics in the Escherichia coli species results in highly diverse adaptive paths.</title>
        <authorList>
            <person name="Touchon M."/>
            <person name="Hoede C."/>
            <person name="Tenaillon O."/>
            <person name="Barbe V."/>
            <person name="Baeriswyl S."/>
            <person name="Bidet P."/>
            <person name="Bingen E."/>
            <person name="Bonacorsi S."/>
            <person name="Bouchier C."/>
            <person name="Bouvet O."/>
            <person name="Calteau A."/>
            <person name="Chiapello H."/>
            <person name="Clermont O."/>
            <person name="Cruveiller S."/>
            <person name="Danchin A."/>
            <person name="Diard M."/>
            <person name="Dossat C."/>
            <person name="Karoui M.E."/>
            <person name="Frapy E."/>
            <person name="Garry L."/>
            <person name="Ghigo J.M."/>
            <person name="Gilles A.M."/>
            <person name="Johnson J."/>
            <person name="Le Bouguenec C."/>
            <person name="Lescat M."/>
            <person name="Mangenot S."/>
            <person name="Martinez-Jehanne V."/>
            <person name="Matic I."/>
            <person name="Nassif X."/>
            <person name="Oztas S."/>
            <person name="Petit M.A."/>
            <person name="Pichon C."/>
            <person name="Rouy Z."/>
            <person name="Ruf C.S."/>
            <person name="Schneider D."/>
            <person name="Tourret J."/>
            <person name="Vacherie B."/>
            <person name="Vallenet D."/>
            <person name="Medigue C."/>
            <person name="Rocha E.P.C."/>
            <person name="Denamur E."/>
        </authorList>
    </citation>
    <scope>NUCLEOTIDE SEQUENCE [LARGE SCALE GENOMIC DNA]</scope>
    <source>
        <strain>IAI39 / ExPEC</strain>
    </source>
</reference>
<keyword id="KW-0067">ATP-binding</keyword>
<keyword id="KW-0963">Cytoplasm</keyword>
<keyword id="KW-0227">DNA damage</keyword>
<keyword id="KW-0233">DNA recombination</keyword>
<keyword id="KW-0234">DNA repair</keyword>
<keyword id="KW-0238">DNA-binding</keyword>
<keyword id="KW-0378">Hydrolase</keyword>
<keyword id="KW-0547">Nucleotide-binding</keyword>
<keyword id="KW-0742">SOS response</keyword>
<protein>
    <recommendedName>
        <fullName evidence="1">Holliday junction branch migration complex subunit RuvB</fullName>
        <ecNumber evidence="1">3.6.4.-</ecNumber>
    </recommendedName>
</protein>
<feature type="chain" id="PRO_1000195222" description="Holliday junction branch migration complex subunit RuvB">
    <location>
        <begin position="1"/>
        <end position="336"/>
    </location>
</feature>
<feature type="region of interest" description="Large ATPase domain (RuvB-L)" evidence="1">
    <location>
        <begin position="4"/>
        <end position="184"/>
    </location>
</feature>
<feature type="region of interest" description="Small ATPAse domain (RuvB-S)" evidence="1">
    <location>
        <begin position="185"/>
        <end position="255"/>
    </location>
</feature>
<feature type="region of interest" description="Head domain (RuvB-H)" evidence="1">
    <location>
        <begin position="258"/>
        <end position="336"/>
    </location>
</feature>
<feature type="binding site" evidence="1">
    <location>
        <position position="23"/>
    </location>
    <ligand>
        <name>ATP</name>
        <dbReference type="ChEBI" id="CHEBI:30616"/>
    </ligand>
</feature>
<feature type="binding site" evidence="1">
    <location>
        <position position="24"/>
    </location>
    <ligand>
        <name>ATP</name>
        <dbReference type="ChEBI" id="CHEBI:30616"/>
    </ligand>
</feature>
<feature type="binding site" evidence="1">
    <location>
        <position position="65"/>
    </location>
    <ligand>
        <name>ATP</name>
        <dbReference type="ChEBI" id="CHEBI:30616"/>
    </ligand>
</feature>
<feature type="binding site" evidence="1">
    <location>
        <position position="68"/>
    </location>
    <ligand>
        <name>ATP</name>
        <dbReference type="ChEBI" id="CHEBI:30616"/>
    </ligand>
</feature>
<feature type="binding site" evidence="1">
    <location>
        <position position="69"/>
    </location>
    <ligand>
        <name>ATP</name>
        <dbReference type="ChEBI" id="CHEBI:30616"/>
    </ligand>
</feature>
<feature type="binding site" evidence="1">
    <location>
        <position position="69"/>
    </location>
    <ligand>
        <name>Mg(2+)</name>
        <dbReference type="ChEBI" id="CHEBI:18420"/>
    </ligand>
</feature>
<feature type="binding site" evidence="1">
    <location>
        <position position="70"/>
    </location>
    <ligand>
        <name>ATP</name>
        <dbReference type="ChEBI" id="CHEBI:30616"/>
    </ligand>
</feature>
<feature type="binding site" evidence="1">
    <location>
        <begin position="131"/>
        <end position="133"/>
    </location>
    <ligand>
        <name>ATP</name>
        <dbReference type="ChEBI" id="CHEBI:30616"/>
    </ligand>
</feature>
<feature type="binding site" evidence="1">
    <location>
        <position position="174"/>
    </location>
    <ligand>
        <name>ATP</name>
        <dbReference type="ChEBI" id="CHEBI:30616"/>
    </ligand>
</feature>
<feature type="binding site" evidence="1">
    <location>
        <position position="184"/>
    </location>
    <ligand>
        <name>ATP</name>
        <dbReference type="ChEBI" id="CHEBI:30616"/>
    </ligand>
</feature>
<feature type="binding site" evidence="1">
    <location>
        <position position="221"/>
    </location>
    <ligand>
        <name>ATP</name>
        <dbReference type="ChEBI" id="CHEBI:30616"/>
    </ligand>
</feature>
<feature type="binding site" evidence="1">
    <location>
        <position position="294"/>
    </location>
    <ligand>
        <name>DNA</name>
        <dbReference type="ChEBI" id="CHEBI:16991"/>
    </ligand>
</feature>
<feature type="binding site" evidence="1">
    <location>
        <position position="313"/>
    </location>
    <ligand>
        <name>DNA</name>
        <dbReference type="ChEBI" id="CHEBI:16991"/>
    </ligand>
</feature>
<feature type="binding site" evidence="1">
    <location>
        <position position="318"/>
    </location>
    <ligand>
        <name>DNA</name>
        <dbReference type="ChEBI" id="CHEBI:16991"/>
    </ligand>
</feature>
<dbReference type="EC" id="3.6.4.-" evidence="1"/>
<dbReference type="EMBL" id="CU928164">
    <property type="protein sequence ID" value="CAR17323.1"/>
    <property type="molecule type" value="Genomic_DNA"/>
</dbReference>
<dbReference type="RefSeq" id="WP_000568522.1">
    <property type="nucleotide sequence ID" value="NC_011750.1"/>
</dbReference>
<dbReference type="RefSeq" id="YP_002407197.1">
    <property type="nucleotide sequence ID" value="NC_011750.1"/>
</dbReference>
<dbReference type="SMR" id="B7NS58"/>
<dbReference type="STRING" id="585057.ECIAI39_1189"/>
<dbReference type="GeneID" id="86860002"/>
<dbReference type="KEGG" id="ect:ECIAI39_1189"/>
<dbReference type="PATRIC" id="fig|585057.6.peg.1246"/>
<dbReference type="HOGENOM" id="CLU_055599_1_0_6"/>
<dbReference type="Proteomes" id="UP000000749">
    <property type="component" value="Chromosome"/>
</dbReference>
<dbReference type="GO" id="GO:0005737">
    <property type="term" value="C:cytoplasm"/>
    <property type="evidence" value="ECO:0007669"/>
    <property type="project" value="UniProtKB-SubCell"/>
</dbReference>
<dbReference type="GO" id="GO:0048476">
    <property type="term" value="C:Holliday junction resolvase complex"/>
    <property type="evidence" value="ECO:0007669"/>
    <property type="project" value="UniProtKB-UniRule"/>
</dbReference>
<dbReference type="GO" id="GO:0005524">
    <property type="term" value="F:ATP binding"/>
    <property type="evidence" value="ECO:0007669"/>
    <property type="project" value="UniProtKB-UniRule"/>
</dbReference>
<dbReference type="GO" id="GO:0016887">
    <property type="term" value="F:ATP hydrolysis activity"/>
    <property type="evidence" value="ECO:0007669"/>
    <property type="project" value="InterPro"/>
</dbReference>
<dbReference type="GO" id="GO:0000400">
    <property type="term" value="F:four-way junction DNA binding"/>
    <property type="evidence" value="ECO:0007669"/>
    <property type="project" value="UniProtKB-UniRule"/>
</dbReference>
<dbReference type="GO" id="GO:0009378">
    <property type="term" value="F:four-way junction helicase activity"/>
    <property type="evidence" value="ECO:0007669"/>
    <property type="project" value="InterPro"/>
</dbReference>
<dbReference type="GO" id="GO:0006310">
    <property type="term" value="P:DNA recombination"/>
    <property type="evidence" value="ECO:0007669"/>
    <property type="project" value="UniProtKB-UniRule"/>
</dbReference>
<dbReference type="GO" id="GO:0006281">
    <property type="term" value="P:DNA repair"/>
    <property type="evidence" value="ECO:0007669"/>
    <property type="project" value="UniProtKB-UniRule"/>
</dbReference>
<dbReference type="GO" id="GO:0009432">
    <property type="term" value="P:SOS response"/>
    <property type="evidence" value="ECO:0007669"/>
    <property type="project" value="UniProtKB-UniRule"/>
</dbReference>
<dbReference type="CDD" id="cd00009">
    <property type="entry name" value="AAA"/>
    <property type="match status" value="1"/>
</dbReference>
<dbReference type="FunFam" id="1.10.10.10:FF:000086">
    <property type="entry name" value="Holliday junction ATP-dependent DNA helicase RuvB"/>
    <property type="match status" value="1"/>
</dbReference>
<dbReference type="FunFam" id="1.10.8.60:FF:000023">
    <property type="entry name" value="Holliday junction ATP-dependent DNA helicase RuvB"/>
    <property type="match status" value="1"/>
</dbReference>
<dbReference type="FunFam" id="3.40.50.300:FF:000073">
    <property type="entry name" value="Holliday junction ATP-dependent DNA helicase RuvB"/>
    <property type="match status" value="1"/>
</dbReference>
<dbReference type="Gene3D" id="1.10.8.60">
    <property type="match status" value="1"/>
</dbReference>
<dbReference type="Gene3D" id="3.40.50.300">
    <property type="entry name" value="P-loop containing nucleotide triphosphate hydrolases"/>
    <property type="match status" value="1"/>
</dbReference>
<dbReference type="Gene3D" id="1.10.10.10">
    <property type="entry name" value="Winged helix-like DNA-binding domain superfamily/Winged helix DNA-binding domain"/>
    <property type="match status" value="1"/>
</dbReference>
<dbReference type="HAMAP" id="MF_00016">
    <property type="entry name" value="DNA_HJ_migration_RuvB"/>
    <property type="match status" value="1"/>
</dbReference>
<dbReference type="InterPro" id="IPR003593">
    <property type="entry name" value="AAA+_ATPase"/>
</dbReference>
<dbReference type="InterPro" id="IPR041445">
    <property type="entry name" value="AAA_lid_4"/>
</dbReference>
<dbReference type="InterPro" id="IPR004605">
    <property type="entry name" value="DNA_helicase_Holl-junc_RuvB"/>
</dbReference>
<dbReference type="InterPro" id="IPR027417">
    <property type="entry name" value="P-loop_NTPase"/>
</dbReference>
<dbReference type="InterPro" id="IPR008824">
    <property type="entry name" value="RuvB-like_N"/>
</dbReference>
<dbReference type="InterPro" id="IPR008823">
    <property type="entry name" value="RuvB_C"/>
</dbReference>
<dbReference type="InterPro" id="IPR036388">
    <property type="entry name" value="WH-like_DNA-bd_sf"/>
</dbReference>
<dbReference type="InterPro" id="IPR036390">
    <property type="entry name" value="WH_DNA-bd_sf"/>
</dbReference>
<dbReference type="NCBIfam" id="NF000868">
    <property type="entry name" value="PRK00080.1"/>
    <property type="match status" value="1"/>
</dbReference>
<dbReference type="NCBIfam" id="TIGR00635">
    <property type="entry name" value="ruvB"/>
    <property type="match status" value="1"/>
</dbReference>
<dbReference type="PANTHER" id="PTHR42848">
    <property type="match status" value="1"/>
</dbReference>
<dbReference type="PANTHER" id="PTHR42848:SF1">
    <property type="entry name" value="HOLLIDAY JUNCTION BRANCH MIGRATION COMPLEX SUBUNIT RUVB"/>
    <property type="match status" value="1"/>
</dbReference>
<dbReference type="Pfam" id="PF17864">
    <property type="entry name" value="AAA_lid_4"/>
    <property type="match status" value="1"/>
</dbReference>
<dbReference type="Pfam" id="PF05491">
    <property type="entry name" value="RuvB_C"/>
    <property type="match status" value="1"/>
</dbReference>
<dbReference type="Pfam" id="PF05496">
    <property type="entry name" value="RuvB_N"/>
    <property type="match status" value="1"/>
</dbReference>
<dbReference type="SMART" id="SM00382">
    <property type="entry name" value="AAA"/>
    <property type="match status" value="1"/>
</dbReference>
<dbReference type="SUPFAM" id="SSF52540">
    <property type="entry name" value="P-loop containing nucleoside triphosphate hydrolases"/>
    <property type="match status" value="1"/>
</dbReference>
<dbReference type="SUPFAM" id="SSF46785">
    <property type="entry name" value="Winged helix' DNA-binding domain"/>
    <property type="match status" value="1"/>
</dbReference>
<accession>B7NS58</accession>
<comment type="function">
    <text evidence="1">The RuvA-RuvB-RuvC complex processes Holliday junction (HJ) DNA during genetic recombination and DNA repair, while the RuvA-RuvB complex plays an important role in the rescue of blocked DNA replication forks via replication fork reversal (RFR). RuvA specifically binds to HJ cruciform DNA, conferring on it an open structure. The RuvB hexamer acts as an ATP-dependent pump, pulling dsDNA into and through the RuvAB complex. RuvB forms 2 homohexamers on either side of HJ DNA bound by 1 or 2 RuvA tetramers; 4 subunits per hexamer contact DNA at a time. Coordinated motions by a converter formed by DNA-disengaged RuvB subunits stimulates ATP hydrolysis and nucleotide exchange. Immobilization of the converter enables RuvB to convert the ATP-contained energy into a lever motion, pulling 2 nucleotides of DNA out of the RuvA tetramer per ATP hydrolyzed, thus driving DNA branch migration. The RuvB motors rotate together with the DNA substrate, which together with the progressing nucleotide cycle form the mechanistic basis for DNA recombination by continuous HJ branch migration. Branch migration allows RuvC to scan DNA until it finds its consensus sequence, where it cleaves and resolves cruciform DNA.</text>
</comment>
<comment type="catalytic activity">
    <reaction evidence="1">
        <text>ATP + H2O = ADP + phosphate + H(+)</text>
        <dbReference type="Rhea" id="RHEA:13065"/>
        <dbReference type="ChEBI" id="CHEBI:15377"/>
        <dbReference type="ChEBI" id="CHEBI:15378"/>
        <dbReference type="ChEBI" id="CHEBI:30616"/>
        <dbReference type="ChEBI" id="CHEBI:43474"/>
        <dbReference type="ChEBI" id="CHEBI:456216"/>
    </reaction>
</comment>
<comment type="subunit">
    <text evidence="1">Homohexamer. Forms an RuvA(8)-RuvB(12)-Holliday junction (HJ) complex. HJ DNA is sandwiched between 2 RuvA tetramers; dsDNA enters through RuvA and exits via RuvB. An RuvB hexamer assembles on each DNA strand where it exits the tetramer. Each RuvB hexamer is contacted by two RuvA subunits (via domain III) on 2 adjacent RuvB subunits; this complex drives branch migration. In the full resolvosome a probable DNA-RuvA(4)-RuvB(12)-RuvC(2) complex forms which resolves the HJ.</text>
</comment>
<comment type="subcellular location">
    <subcellularLocation>
        <location evidence="1">Cytoplasm</location>
    </subcellularLocation>
</comment>
<comment type="domain">
    <text evidence="1">Has 3 domains, the large (RuvB-L) and small ATPase (RuvB-S) domains and the C-terminal head (RuvB-H) domain. The head domain binds DNA, while the ATPase domains jointly bind ATP, ADP or are empty depending on the state of the subunit in the translocation cycle. During a single DNA translocation step the structure of each domain remains the same, but their relative positions change.</text>
</comment>
<comment type="similarity">
    <text evidence="1">Belongs to the RuvB family.</text>
</comment>
<organism>
    <name type="scientific">Escherichia coli O7:K1 (strain IAI39 / ExPEC)</name>
    <dbReference type="NCBI Taxonomy" id="585057"/>
    <lineage>
        <taxon>Bacteria</taxon>
        <taxon>Pseudomonadati</taxon>
        <taxon>Pseudomonadota</taxon>
        <taxon>Gammaproteobacteria</taxon>
        <taxon>Enterobacterales</taxon>
        <taxon>Enterobacteriaceae</taxon>
        <taxon>Escherichia</taxon>
    </lineage>
</organism>
<name>RUVB_ECO7I</name>
<gene>
    <name evidence="1" type="primary">ruvB</name>
    <name type="ordered locus">ECIAI39_1189</name>
</gene>
<sequence length="336" mass="37172">MIEADRLISAGTTLPEDVADRAIRPKLLEEYVGQPQVRSQMEIFIKAAKLRGDALDHLLIFGPPGLGKTTLANIVANEMGVNLRTTSGPVLEKAGDLAAMLTNLEPHDVLFIDEIHRLSPVVEEVLYPAMEDYQLDIMIGEGPAARSIKIDLPPFTLIGATTRAGSLTSPLRDRFGIVQRLEFYQVPDLQYIVSRSARFMGLEMSDDGALEVARRARGTPRIANRLLRRVRDFAEVKHDGTISADIAAQALDMLNVDAEGFDYMDRKLLLAVIDKFFGGPVGLDNLAAAIGEERETIEDVLEPYLIQQGFLQRTPRGRMATVRAWNHFGITPPEMP</sequence>
<evidence type="ECO:0000255" key="1">
    <source>
        <dbReference type="HAMAP-Rule" id="MF_00016"/>
    </source>
</evidence>